<feature type="chain" id="PRO_0000274116" description="Nickel import ATP-binding protein NikD">
    <location>
        <begin position="1"/>
        <end position="254"/>
    </location>
</feature>
<feature type="domain" description="ABC transporter" evidence="1">
    <location>
        <begin position="2"/>
        <end position="241"/>
    </location>
</feature>
<feature type="binding site" evidence="1">
    <location>
        <begin position="36"/>
        <end position="43"/>
    </location>
    <ligand>
        <name>ATP</name>
        <dbReference type="ChEBI" id="CHEBI:30616"/>
    </ligand>
</feature>
<proteinExistence type="inferred from homology"/>
<keyword id="KW-0067">ATP-binding</keyword>
<keyword id="KW-0997">Cell inner membrane</keyword>
<keyword id="KW-1003">Cell membrane</keyword>
<keyword id="KW-0406">Ion transport</keyword>
<keyword id="KW-0472">Membrane</keyword>
<keyword id="KW-0533">Nickel</keyword>
<keyword id="KW-0921">Nickel transport</keyword>
<keyword id="KW-0547">Nucleotide-binding</keyword>
<keyword id="KW-1278">Translocase</keyword>
<keyword id="KW-0813">Transport</keyword>
<reference key="1">
    <citation type="journal article" date="2005" name="Nucleic Acids Res.">
        <title>Genome dynamics and diversity of Shigella species, the etiologic agents of bacillary dysentery.</title>
        <authorList>
            <person name="Yang F."/>
            <person name="Yang J."/>
            <person name="Zhang X."/>
            <person name="Chen L."/>
            <person name="Jiang Y."/>
            <person name="Yan Y."/>
            <person name="Tang X."/>
            <person name="Wang J."/>
            <person name="Xiong Z."/>
            <person name="Dong J."/>
            <person name="Xue Y."/>
            <person name="Zhu Y."/>
            <person name="Xu X."/>
            <person name="Sun L."/>
            <person name="Chen S."/>
            <person name="Nie H."/>
            <person name="Peng J."/>
            <person name="Xu J."/>
            <person name="Wang Y."/>
            <person name="Yuan Z."/>
            <person name="Wen Y."/>
            <person name="Yao Z."/>
            <person name="Shen Y."/>
            <person name="Qiang B."/>
            <person name="Hou Y."/>
            <person name="Yu J."/>
            <person name="Jin Q."/>
        </authorList>
    </citation>
    <scope>NUCLEOTIDE SEQUENCE [LARGE SCALE GENOMIC DNA]</scope>
    <source>
        <strain>Sb227</strain>
    </source>
</reference>
<accession>Q31VE7</accession>
<evidence type="ECO:0000255" key="1">
    <source>
        <dbReference type="HAMAP-Rule" id="MF_01711"/>
    </source>
</evidence>
<sequence length="254" mass="26883">MPQQIELRNIALQAAQPLVHGVSLTLQRGRVLALVGGSGSGKSLTCAATLGILPAGVRQTAGEILADGKAVYPCALRGIKIATIMQNPRSAFNPLHTMHTHARETCLALGKPADDATLTAAIEAVGLENAARVLKLYPFEMSGGMLQRMMIAMAVLCESPFIIADEPTTDLDVVAQARILDLLESIMQKQAPGMLLVTHDMGVVARLADDVAVMSQGKIVEQGDVETLFNAPKHTVTRSLVSAHLALYGMELAS</sequence>
<dbReference type="EC" id="7.2.2.11" evidence="1"/>
<dbReference type="EMBL" id="CP000036">
    <property type="protein sequence ID" value="ABB67961.1"/>
    <property type="molecule type" value="Genomic_DNA"/>
</dbReference>
<dbReference type="RefSeq" id="WP_001136224.1">
    <property type="nucleotide sequence ID" value="NC_007613.1"/>
</dbReference>
<dbReference type="SMR" id="Q31VE7"/>
<dbReference type="KEGG" id="sbo:SBO_3476"/>
<dbReference type="HOGENOM" id="CLU_000604_1_23_6"/>
<dbReference type="Proteomes" id="UP000007067">
    <property type="component" value="Chromosome"/>
</dbReference>
<dbReference type="GO" id="GO:0005886">
    <property type="term" value="C:plasma membrane"/>
    <property type="evidence" value="ECO:0007669"/>
    <property type="project" value="UniProtKB-SubCell"/>
</dbReference>
<dbReference type="GO" id="GO:0015413">
    <property type="term" value="F:ABC-type nickel transporter activity"/>
    <property type="evidence" value="ECO:0007669"/>
    <property type="project" value="UniProtKB-EC"/>
</dbReference>
<dbReference type="GO" id="GO:0005524">
    <property type="term" value="F:ATP binding"/>
    <property type="evidence" value="ECO:0007669"/>
    <property type="project" value="UniProtKB-KW"/>
</dbReference>
<dbReference type="GO" id="GO:0016887">
    <property type="term" value="F:ATP hydrolysis activity"/>
    <property type="evidence" value="ECO:0007669"/>
    <property type="project" value="InterPro"/>
</dbReference>
<dbReference type="GO" id="GO:0016151">
    <property type="term" value="F:nickel cation binding"/>
    <property type="evidence" value="ECO:0007669"/>
    <property type="project" value="InterPro"/>
</dbReference>
<dbReference type="CDD" id="cd03257">
    <property type="entry name" value="ABC_NikE_OppD_transporters"/>
    <property type="match status" value="1"/>
</dbReference>
<dbReference type="FunFam" id="3.40.50.300:FF:000858">
    <property type="entry name" value="Nickel import ATP-binding protein NikD"/>
    <property type="match status" value="1"/>
</dbReference>
<dbReference type="Gene3D" id="3.40.50.300">
    <property type="entry name" value="P-loop containing nucleotide triphosphate hydrolases"/>
    <property type="match status" value="1"/>
</dbReference>
<dbReference type="InterPro" id="IPR003593">
    <property type="entry name" value="AAA+_ATPase"/>
</dbReference>
<dbReference type="InterPro" id="IPR050388">
    <property type="entry name" value="ABC_Ni/Peptide_Import"/>
</dbReference>
<dbReference type="InterPro" id="IPR003439">
    <property type="entry name" value="ABC_transporter-like_ATP-bd"/>
</dbReference>
<dbReference type="InterPro" id="IPR017871">
    <property type="entry name" value="ABC_transporter-like_CS"/>
</dbReference>
<dbReference type="InterPro" id="IPR014138">
    <property type="entry name" value="Nickel_NikD"/>
</dbReference>
<dbReference type="InterPro" id="IPR027417">
    <property type="entry name" value="P-loop_NTPase"/>
</dbReference>
<dbReference type="NCBIfam" id="TIGR02770">
    <property type="entry name" value="nickel_nikD"/>
    <property type="match status" value="1"/>
</dbReference>
<dbReference type="PANTHER" id="PTHR43297:SF2">
    <property type="entry name" value="DIPEPTIDE TRANSPORT ATP-BINDING PROTEIN DPPD"/>
    <property type="match status" value="1"/>
</dbReference>
<dbReference type="PANTHER" id="PTHR43297">
    <property type="entry name" value="OLIGOPEPTIDE TRANSPORT ATP-BINDING PROTEIN APPD"/>
    <property type="match status" value="1"/>
</dbReference>
<dbReference type="Pfam" id="PF00005">
    <property type="entry name" value="ABC_tran"/>
    <property type="match status" value="1"/>
</dbReference>
<dbReference type="SMART" id="SM00382">
    <property type="entry name" value="AAA"/>
    <property type="match status" value="1"/>
</dbReference>
<dbReference type="SUPFAM" id="SSF52540">
    <property type="entry name" value="P-loop containing nucleoside triphosphate hydrolases"/>
    <property type="match status" value="1"/>
</dbReference>
<dbReference type="PROSITE" id="PS00211">
    <property type="entry name" value="ABC_TRANSPORTER_1"/>
    <property type="match status" value="1"/>
</dbReference>
<dbReference type="PROSITE" id="PS50893">
    <property type="entry name" value="ABC_TRANSPORTER_2"/>
    <property type="match status" value="1"/>
</dbReference>
<dbReference type="PROSITE" id="PS51247">
    <property type="entry name" value="NIKD"/>
    <property type="match status" value="1"/>
</dbReference>
<protein>
    <recommendedName>
        <fullName evidence="1">Nickel import ATP-binding protein NikD</fullName>
        <ecNumber evidence="1">7.2.2.11</ecNumber>
    </recommendedName>
</protein>
<organism>
    <name type="scientific">Shigella boydii serotype 4 (strain Sb227)</name>
    <dbReference type="NCBI Taxonomy" id="300268"/>
    <lineage>
        <taxon>Bacteria</taxon>
        <taxon>Pseudomonadati</taxon>
        <taxon>Pseudomonadota</taxon>
        <taxon>Gammaproteobacteria</taxon>
        <taxon>Enterobacterales</taxon>
        <taxon>Enterobacteriaceae</taxon>
        <taxon>Shigella</taxon>
    </lineage>
</organism>
<name>NIKD_SHIBS</name>
<gene>
    <name evidence="1" type="primary">nikD</name>
    <name type="ordered locus">SBO_3476</name>
</gene>
<comment type="function">
    <text evidence="1">Part of the ABC transporter complex NikABCDE involved in nickel import. Responsible for energy coupling to the transport system.</text>
</comment>
<comment type="catalytic activity">
    <reaction evidence="1">
        <text>Ni(2+)(out) + ATP + H2O = Ni(2+)(in) + ADP + phosphate + H(+)</text>
        <dbReference type="Rhea" id="RHEA:15557"/>
        <dbReference type="ChEBI" id="CHEBI:15377"/>
        <dbReference type="ChEBI" id="CHEBI:15378"/>
        <dbReference type="ChEBI" id="CHEBI:30616"/>
        <dbReference type="ChEBI" id="CHEBI:43474"/>
        <dbReference type="ChEBI" id="CHEBI:49786"/>
        <dbReference type="ChEBI" id="CHEBI:456216"/>
        <dbReference type="EC" id="7.2.2.11"/>
    </reaction>
</comment>
<comment type="subunit">
    <text evidence="1">The complex is composed of two ATP-binding proteins (NikD and NikE), two transmembrane proteins (NikB and NikC) and a solute-binding protein (NikA).</text>
</comment>
<comment type="subcellular location">
    <subcellularLocation>
        <location evidence="1">Cell inner membrane</location>
        <topology evidence="1">Peripheral membrane protein</topology>
    </subcellularLocation>
</comment>
<comment type="similarity">
    <text evidence="1">Belongs to the ABC transporter superfamily. Nickel importer (TC 3.A.1.5.3) family.</text>
</comment>